<keyword id="KW-0030">Aminoacyl-tRNA synthetase</keyword>
<keyword id="KW-0067">ATP-binding</keyword>
<keyword id="KW-0963">Cytoplasm</keyword>
<keyword id="KW-0436">Ligase</keyword>
<keyword id="KW-0547">Nucleotide-binding</keyword>
<keyword id="KW-0648">Protein biosynthesis</keyword>
<evidence type="ECO:0000255" key="1">
    <source>
        <dbReference type="HAMAP-Rule" id="MF_00176"/>
    </source>
</evidence>
<organism>
    <name type="scientific">Synechococcus sp. (strain CC9605)</name>
    <dbReference type="NCBI Taxonomy" id="110662"/>
    <lineage>
        <taxon>Bacteria</taxon>
        <taxon>Bacillati</taxon>
        <taxon>Cyanobacteriota</taxon>
        <taxon>Cyanophyceae</taxon>
        <taxon>Synechococcales</taxon>
        <taxon>Synechococcaceae</taxon>
        <taxon>Synechococcus</taxon>
    </lineage>
</organism>
<gene>
    <name evidence="1" type="primary">serS</name>
    <name type="ordered locus">Syncc9605_0573</name>
</gene>
<reference key="1">
    <citation type="submission" date="2005-07" db="EMBL/GenBank/DDBJ databases">
        <title>Complete sequence of Synechococcus sp. CC9605.</title>
        <authorList>
            <consortium name="US DOE Joint Genome Institute"/>
            <person name="Copeland A."/>
            <person name="Lucas S."/>
            <person name="Lapidus A."/>
            <person name="Barry K."/>
            <person name="Detter J.C."/>
            <person name="Glavina T."/>
            <person name="Hammon N."/>
            <person name="Israni S."/>
            <person name="Pitluck S."/>
            <person name="Schmutz J."/>
            <person name="Martinez M."/>
            <person name="Larimer F."/>
            <person name="Land M."/>
            <person name="Kyrpides N."/>
            <person name="Ivanova N."/>
            <person name="Richardson P."/>
        </authorList>
    </citation>
    <scope>NUCLEOTIDE SEQUENCE [LARGE SCALE GENOMIC DNA]</scope>
    <source>
        <strain>CC9605</strain>
    </source>
</reference>
<protein>
    <recommendedName>
        <fullName evidence="1">Serine--tRNA ligase</fullName>
        <ecNumber evidence="1">6.1.1.11</ecNumber>
    </recommendedName>
    <alternativeName>
        <fullName evidence="1">Seryl-tRNA synthetase</fullName>
        <shortName evidence="1">SerRS</shortName>
    </alternativeName>
    <alternativeName>
        <fullName evidence="1">Seryl-tRNA(Ser/Sec) synthetase</fullName>
    </alternativeName>
</protein>
<accession>Q3AM35</accession>
<sequence>MLDQRLVRDNPETIAQQLGRRGKAVDLTKLQLIAQQQRDLEQQRSGLQAEGNRIGKEVGQRIKSGADPKGDEVAELRQQGNAIKQKVAVLEEEEKQLSSELKQQLLGFPNLPSEACPDGRSEDDNVEVRRWGTPRVDDGLYEHWQIAERLQLFDTERSVRIAQSRFVTLMGQGARLERALINFMLDLHTSKGYREVLPPVLVNSASLTGSGQLPKFAEESFRCAEDDLWLTPTAEVPVTSLHRDEIIPADQLPLRYAAYSPCFRREAGSYGRDTRGLIRLHQFNKVELYWFVHPDHSDEAHQRITADAEAVLQALELPYRVLDLCTADLGFSARRTYDLEVWLPGAGAYREISSCSVCGDFQARRSSIRTKEGKATKLVHTLNGSGLAVGRTMAALLENGQQSDGSVLLPKALVPYVGRERLQPE</sequence>
<dbReference type="EC" id="6.1.1.11" evidence="1"/>
<dbReference type="EMBL" id="CP000110">
    <property type="protein sequence ID" value="ABB34347.1"/>
    <property type="molecule type" value="Genomic_DNA"/>
</dbReference>
<dbReference type="RefSeq" id="WP_011363578.1">
    <property type="nucleotide sequence ID" value="NC_007516.1"/>
</dbReference>
<dbReference type="SMR" id="Q3AM35"/>
<dbReference type="STRING" id="110662.Syncc9605_0573"/>
<dbReference type="KEGG" id="syd:Syncc9605_0573"/>
<dbReference type="eggNOG" id="COG0172">
    <property type="taxonomic scope" value="Bacteria"/>
</dbReference>
<dbReference type="HOGENOM" id="CLU_023797_1_1_3"/>
<dbReference type="OrthoDB" id="9804647at2"/>
<dbReference type="UniPathway" id="UPA00906">
    <property type="reaction ID" value="UER00895"/>
</dbReference>
<dbReference type="GO" id="GO:0005737">
    <property type="term" value="C:cytoplasm"/>
    <property type="evidence" value="ECO:0007669"/>
    <property type="project" value="UniProtKB-SubCell"/>
</dbReference>
<dbReference type="GO" id="GO:0005524">
    <property type="term" value="F:ATP binding"/>
    <property type="evidence" value="ECO:0007669"/>
    <property type="project" value="UniProtKB-UniRule"/>
</dbReference>
<dbReference type="GO" id="GO:0004828">
    <property type="term" value="F:serine-tRNA ligase activity"/>
    <property type="evidence" value="ECO:0007669"/>
    <property type="project" value="UniProtKB-UniRule"/>
</dbReference>
<dbReference type="GO" id="GO:0016260">
    <property type="term" value="P:selenocysteine biosynthetic process"/>
    <property type="evidence" value="ECO:0007669"/>
    <property type="project" value="UniProtKB-UniRule"/>
</dbReference>
<dbReference type="GO" id="GO:0006434">
    <property type="term" value="P:seryl-tRNA aminoacylation"/>
    <property type="evidence" value="ECO:0007669"/>
    <property type="project" value="UniProtKB-UniRule"/>
</dbReference>
<dbReference type="CDD" id="cd00770">
    <property type="entry name" value="SerRS_core"/>
    <property type="match status" value="1"/>
</dbReference>
<dbReference type="Gene3D" id="3.30.930.10">
    <property type="entry name" value="Bira Bifunctional Protein, Domain 2"/>
    <property type="match status" value="1"/>
</dbReference>
<dbReference type="Gene3D" id="1.10.287.40">
    <property type="entry name" value="Serine-tRNA synthetase, tRNA binding domain"/>
    <property type="match status" value="1"/>
</dbReference>
<dbReference type="HAMAP" id="MF_00176">
    <property type="entry name" value="Ser_tRNA_synth_type1"/>
    <property type="match status" value="1"/>
</dbReference>
<dbReference type="InterPro" id="IPR002314">
    <property type="entry name" value="aa-tRNA-synt_IIb"/>
</dbReference>
<dbReference type="InterPro" id="IPR006195">
    <property type="entry name" value="aa-tRNA-synth_II"/>
</dbReference>
<dbReference type="InterPro" id="IPR045864">
    <property type="entry name" value="aa-tRNA-synth_II/BPL/LPL"/>
</dbReference>
<dbReference type="InterPro" id="IPR002317">
    <property type="entry name" value="Ser-tRNA-ligase_type_1"/>
</dbReference>
<dbReference type="InterPro" id="IPR015866">
    <property type="entry name" value="Ser-tRNA-synth_1_N"/>
</dbReference>
<dbReference type="InterPro" id="IPR042103">
    <property type="entry name" value="SerRS_1_N_sf"/>
</dbReference>
<dbReference type="InterPro" id="IPR033729">
    <property type="entry name" value="SerRS_core"/>
</dbReference>
<dbReference type="InterPro" id="IPR010978">
    <property type="entry name" value="tRNA-bd_arm"/>
</dbReference>
<dbReference type="NCBIfam" id="TIGR00414">
    <property type="entry name" value="serS"/>
    <property type="match status" value="1"/>
</dbReference>
<dbReference type="PANTHER" id="PTHR43697:SF1">
    <property type="entry name" value="SERINE--TRNA LIGASE"/>
    <property type="match status" value="1"/>
</dbReference>
<dbReference type="PANTHER" id="PTHR43697">
    <property type="entry name" value="SERYL-TRNA SYNTHETASE"/>
    <property type="match status" value="1"/>
</dbReference>
<dbReference type="Pfam" id="PF02403">
    <property type="entry name" value="Seryl_tRNA_N"/>
    <property type="match status" value="1"/>
</dbReference>
<dbReference type="Pfam" id="PF00587">
    <property type="entry name" value="tRNA-synt_2b"/>
    <property type="match status" value="1"/>
</dbReference>
<dbReference type="PIRSF" id="PIRSF001529">
    <property type="entry name" value="Ser-tRNA-synth_IIa"/>
    <property type="match status" value="1"/>
</dbReference>
<dbReference type="PRINTS" id="PR00981">
    <property type="entry name" value="TRNASYNTHSER"/>
</dbReference>
<dbReference type="SUPFAM" id="SSF55681">
    <property type="entry name" value="Class II aaRS and biotin synthetases"/>
    <property type="match status" value="1"/>
</dbReference>
<dbReference type="SUPFAM" id="SSF46589">
    <property type="entry name" value="tRNA-binding arm"/>
    <property type="match status" value="1"/>
</dbReference>
<dbReference type="PROSITE" id="PS50862">
    <property type="entry name" value="AA_TRNA_LIGASE_II"/>
    <property type="match status" value="1"/>
</dbReference>
<comment type="function">
    <text evidence="1">Catalyzes the attachment of serine to tRNA(Ser). Is also able to aminoacylate tRNA(Sec) with serine, to form the misacylated tRNA L-seryl-tRNA(Sec), which will be further converted into selenocysteinyl-tRNA(Sec).</text>
</comment>
<comment type="catalytic activity">
    <reaction evidence="1">
        <text>tRNA(Ser) + L-serine + ATP = L-seryl-tRNA(Ser) + AMP + diphosphate + H(+)</text>
        <dbReference type="Rhea" id="RHEA:12292"/>
        <dbReference type="Rhea" id="RHEA-COMP:9669"/>
        <dbReference type="Rhea" id="RHEA-COMP:9703"/>
        <dbReference type="ChEBI" id="CHEBI:15378"/>
        <dbReference type="ChEBI" id="CHEBI:30616"/>
        <dbReference type="ChEBI" id="CHEBI:33019"/>
        <dbReference type="ChEBI" id="CHEBI:33384"/>
        <dbReference type="ChEBI" id="CHEBI:78442"/>
        <dbReference type="ChEBI" id="CHEBI:78533"/>
        <dbReference type="ChEBI" id="CHEBI:456215"/>
        <dbReference type="EC" id="6.1.1.11"/>
    </reaction>
</comment>
<comment type="catalytic activity">
    <reaction evidence="1">
        <text>tRNA(Sec) + L-serine + ATP = L-seryl-tRNA(Sec) + AMP + diphosphate + H(+)</text>
        <dbReference type="Rhea" id="RHEA:42580"/>
        <dbReference type="Rhea" id="RHEA-COMP:9742"/>
        <dbReference type="Rhea" id="RHEA-COMP:10128"/>
        <dbReference type="ChEBI" id="CHEBI:15378"/>
        <dbReference type="ChEBI" id="CHEBI:30616"/>
        <dbReference type="ChEBI" id="CHEBI:33019"/>
        <dbReference type="ChEBI" id="CHEBI:33384"/>
        <dbReference type="ChEBI" id="CHEBI:78442"/>
        <dbReference type="ChEBI" id="CHEBI:78533"/>
        <dbReference type="ChEBI" id="CHEBI:456215"/>
        <dbReference type="EC" id="6.1.1.11"/>
    </reaction>
</comment>
<comment type="pathway">
    <text evidence="1">Aminoacyl-tRNA biosynthesis; selenocysteinyl-tRNA(Sec) biosynthesis; L-seryl-tRNA(Sec) from L-serine and tRNA(Sec): step 1/1.</text>
</comment>
<comment type="subunit">
    <text evidence="1">Homodimer. The tRNA molecule binds across the dimer.</text>
</comment>
<comment type="subcellular location">
    <subcellularLocation>
        <location evidence="1">Cytoplasm</location>
    </subcellularLocation>
</comment>
<comment type="domain">
    <text evidence="1">Consists of two distinct domains, a catalytic core and a N-terminal extension that is involved in tRNA binding.</text>
</comment>
<comment type="similarity">
    <text evidence="1">Belongs to the class-II aminoacyl-tRNA synthetase family. Type-1 seryl-tRNA synthetase subfamily.</text>
</comment>
<feature type="chain" id="PRO_1000019853" description="Serine--tRNA ligase">
    <location>
        <begin position="1"/>
        <end position="425"/>
    </location>
</feature>
<feature type="binding site" evidence="1">
    <location>
        <begin position="233"/>
        <end position="235"/>
    </location>
    <ligand>
        <name>L-serine</name>
        <dbReference type="ChEBI" id="CHEBI:33384"/>
    </ligand>
</feature>
<feature type="binding site" evidence="1">
    <location>
        <begin position="264"/>
        <end position="266"/>
    </location>
    <ligand>
        <name>ATP</name>
        <dbReference type="ChEBI" id="CHEBI:30616"/>
    </ligand>
</feature>
<feature type="binding site" evidence="1">
    <location>
        <position position="287"/>
    </location>
    <ligand>
        <name>L-serine</name>
        <dbReference type="ChEBI" id="CHEBI:33384"/>
    </ligand>
</feature>
<feature type="binding site" evidence="1">
    <location>
        <begin position="351"/>
        <end position="354"/>
    </location>
    <ligand>
        <name>ATP</name>
        <dbReference type="ChEBI" id="CHEBI:30616"/>
    </ligand>
</feature>
<feature type="binding site" evidence="1">
    <location>
        <position position="385"/>
    </location>
    <ligand>
        <name>L-serine</name>
        <dbReference type="ChEBI" id="CHEBI:33384"/>
    </ligand>
</feature>
<name>SYS_SYNSC</name>
<proteinExistence type="inferred from homology"/>